<accession>A5GHR6</accession>
<evidence type="ECO:0000255" key="1">
    <source>
        <dbReference type="HAMAP-Rule" id="MF_00443"/>
    </source>
</evidence>
<evidence type="ECO:0000256" key="2">
    <source>
        <dbReference type="SAM" id="MobiDB-lite"/>
    </source>
</evidence>
<keyword id="KW-0963">Cytoplasm</keyword>
<keyword id="KW-1185">Reference proteome</keyword>
<keyword id="KW-0704">Schiff base</keyword>
<keyword id="KW-0784">Thiamine biosynthesis</keyword>
<keyword id="KW-0808">Transferase</keyword>
<proteinExistence type="inferred from homology"/>
<sequence>MDSTPTSTDTLVIGGRQFRSRLFTGTGKYPNLALMQQSLDRSDCEMVTVAVRRVQTVAAGHAGLMEAIDWTKIWMLPNTAGCTTAEEAIRVARLGRELARLAGQEHNTFVKLEVIPDSRHLLPDPFGTLEAAEQLVKEGFTVLPYINADPLLAKRLEEVGCATVMPLGSPIGSGQGLRNASNIALIIENASVPVVVDAGIGVPSEASAALEMGADAVLVNSAIALAGNPPLMAEAMASAVRAGRQAFQAGRLPTRAQASPSSPTTGKVND</sequence>
<comment type="function">
    <text evidence="1">Catalyzes the rearrangement of 1-deoxy-D-xylulose 5-phosphate (DXP) to produce the thiazole phosphate moiety of thiamine. Sulfur is provided by the thiocarboxylate moiety of the carrier protein ThiS. In vitro, sulfur can be provided by H(2)S.</text>
</comment>
<comment type="catalytic activity">
    <reaction evidence="1">
        <text>[ThiS sulfur-carrier protein]-C-terminal-Gly-aminoethanethioate + 2-iminoacetate + 1-deoxy-D-xylulose 5-phosphate = [ThiS sulfur-carrier protein]-C-terminal Gly-Gly + 2-[(2R,5Z)-2-carboxy-4-methylthiazol-5(2H)-ylidene]ethyl phosphate + 2 H2O + H(+)</text>
        <dbReference type="Rhea" id="RHEA:26297"/>
        <dbReference type="Rhea" id="RHEA-COMP:12909"/>
        <dbReference type="Rhea" id="RHEA-COMP:19908"/>
        <dbReference type="ChEBI" id="CHEBI:15377"/>
        <dbReference type="ChEBI" id="CHEBI:15378"/>
        <dbReference type="ChEBI" id="CHEBI:57792"/>
        <dbReference type="ChEBI" id="CHEBI:62899"/>
        <dbReference type="ChEBI" id="CHEBI:77846"/>
        <dbReference type="ChEBI" id="CHEBI:90778"/>
        <dbReference type="ChEBI" id="CHEBI:232372"/>
        <dbReference type="EC" id="2.8.1.10"/>
    </reaction>
</comment>
<comment type="pathway">
    <text evidence="1">Cofactor biosynthesis; thiamine diphosphate biosynthesis.</text>
</comment>
<comment type="subunit">
    <text evidence="1">Homotetramer. Forms heterodimers with either ThiH or ThiS.</text>
</comment>
<comment type="subcellular location">
    <subcellularLocation>
        <location evidence="1">Cytoplasm</location>
    </subcellularLocation>
</comment>
<comment type="similarity">
    <text evidence="1">Belongs to the ThiG family.</text>
</comment>
<organism>
    <name type="scientific">Synechococcus sp. (strain WH7803)</name>
    <dbReference type="NCBI Taxonomy" id="32051"/>
    <lineage>
        <taxon>Bacteria</taxon>
        <taxon>Bacillati</taxon>
        <taxon>Cyanobacteriota</taxon>
        <taxon>Cyanophyceae</taxon>
        <taxon>Synechococcales</taxon>
        <taxon>Synechococcaceae</taxon>
        <taxon>Synechococcus</taxon>
    </lineage>
</organism>
<feature type="chain" id="PRO_1000026052" description="Thiazole synthase">
    <location>
        <begin position="1"/>
        <end position="270"/>
    </location>
</feature>
<feature type="region of interest" description="Disordered" evidence="2">
    <location>
        <begin position="249"/>
        <end position="270"/>
    </location>
</feature>
<feature type="compositionally biased region" description="Polar residues" evidence="2">
    <location>
        <begin position="256"/>
        <end position="270"/>
    </location>
</feature>
<feature type="active site" description="Schiff-base intermediate with DXP" evidence="1">
    <location>
        <position position="111"/>
    </location>
</feature>
<feature type="binding site" evidence="1">
    <location>
        <position position="172"/>
    </location>
    <ligand>
        <name>1-deoxy-D-xylulose 5-phosphate</name>
        <dbReference type="ChEBI" id="CHEBI:57792"/>
    </ligand>
</feature>
<feature type="binding site" evidence="1">
    <location>
        <begin position="198"/>
        <end position="199"/>
    </location>
    <ligand>
        <name>1-deoxy-D-xylulose 5-phosphate</name>
        <dbReference type="ChEBI" id="CHEBI:57792"/>
    </ligand>
</feature>
<feature type="binding site" evidence="1">
    <location>
        <begin position="220"/>
        <end position="221"/>
    </location>
    <ligand>
        <name>1-deoxy-D-xylulose 5-phosphate</name>
        <dbReference type="ChEBI" id="CHEBI:57792"/>
    </ligand>
</feature>
<gene>
    <name evidence="1" type="primary">thiG</name>
    <name type="ordered locus">SynWH7803_0055</name>
</gene>
<reference key="1">
    <citation type="submission" date="2006-05" db="EMBL/GenBank/DDBJ databases">
        <authorList>
            <consortium name="Genoscope"/>
        </authorList>
    </citation>
    <scope>NUCLEOTIDE SEQUENCE [LARGE SCALE GENOMIC DNA]</scope>
    <source>
        <strain>WH7803</strain>
    </source>
</reference>
<name>THIG_SYNPW</name>
<dbReference type="EC" id="2.8.1.10" evidence="1"/>
<dbReference type="EMBL" id="CT971583">
    <property type="protein sequence ID" value="CAK22481.1"/>
    <property type="molecule type" value="Genomic_DNA"/>
</dbReference>
<dbReference type="SMR" id="A5GHR6"/>
<dbReference type="STRING" id="32051.SynWH7803_0055"/>
<dbReference type="KEGG" id="syx:SynWH7803_0055"/>
<dbReference type="eggNOG" id="COG2022">
    <property type="taxonomic scope" value="Bacteria"/>
</dbReference>
<dbReference type="HOGENOM" id="CLU_062233_1_0_3"/>
<dbReference type="OrthoDB" id="9805935at2"/>
<dbReference type="UniPathway" id="UPA00060"/>
<dbReference type="Proteomes" id="UP000001566">
    <property type="component" value="Chromosome"/>
</dbReference>
<dbReference type="GO" id="GO:0005737">
    <property type="term" value="C:cytoplasm"/>
    <property type="evidence" value="ECO:0007669"/>
    <property type="project" value="UniProtKB-SubCell"/>
</dbReference>
<dbReference type="GO" id="GO:1990107">
    <property type="term" value="F:thiazole synthase activity"/>
    <property type="evidence" value="ECO:0007669"/>
    <property type="project" value="UniProtKB-EC"/>
</dbReference>
<dbReference type="GO" id="GO:0009229">
    <property type="term" value="P:thiamine diphosphate biosynthetic process"/>
    <property type="evidence" value="ECO:0007669"/>
    <property type="project" value="UniProtKB-UniRule"/>
</dbReference>
<dbReference type="CDD" id="cd04728">
    <property type="entry name" value="ThiG"/>
    <property type="match status" value="1"/>
</dbReference>
<dbReference type="Gene3D" id="3.20.20.70">
    <property type="entry name" value="Aldolase class I"/>
    <property type="match status" value="1"/>
</dbReference>
<dbReference type="HAMAP" id="MF_00443">
    <property type="entry name" value="ThiG"/>
    <property type="match status" value="1"/>
</dbReference>
<dbReference type="InterPro" id="IPR013785">
    <property type="entry name" value="Aldolase_TIM"/>
</dbReference>
<dbReference type="InterPro" id="IPR033983">
    <property type="entry name" value="Thiazole_synthase_ThiG"/>
</dbReference>
<dbReference type="InterPro" id="IPR008867">
    <property type="entry name" value="ThiG"/>
</dbReference>
<dbReference type="PANTHER" id="PTHR34266">
    <property type="entry name" value="THIAZOLE SYNTHASE"/>
    <property type="match status" value="1"/>
</dbReference>
<dbReference type="PANTHER" id="PTHR34266:SF2">
    <property type="entry name" value="THIAZOLE SYNTHASE"/>
    <property type="match status" value="1"/>
</dbReference>
<dbReference type="Pfam" id="PF05690">
    <property type="entry name" value="ThiG"/>
    <property type="match status" value="1"/>
</dbReference>
<dbReference type="SUPFAM" id="SSF110399">
    <property type="entry name" value="ThiG-like"/>
    <property type="match status" value="1"/>
</dbReference>
<protein>
    <recommendedName>
        <fullName evidence="1">Thiazole synthase</fullName>
        <ecNumber evidence="1">2.8.1.10</ecNumber>
    </recommendedName>
</protein>